<accession>Q9AP33</accession>
<dbReference type="EC" id="4.2.1.108"/>
<dbReference type="EMBL" id="AF316874">
    <property type="protein sequence ID" value="AAK12085.1"/>
    <property type="molecule type" value="Genomic_DNA"/>
</dbReference>
<dbReference type="SMR" id="Q9AP33"/>
<dbReference type="KEGG" id="ag:AAK12085"/>
<dbReference type="BRENDA" id="4.2.1.108">
    <property type="organism ID" value="682"/>
</dbReference>
<dbReference type="UniPathway" id="UPA00067">
    <property type="reaction ID" value="UER00123"/>
</dbReference>
<dbReference type="GO" id="GO:0033990">
    <property type="term" value="F:ectoine synthase activity"/>
    <property type="evidence" value="ECO:0007669"/>
    <property type="project" value="UniProtKB-EC"/>
</dbReference>
<dbReference type="GO" id="GO:0019491">
    <property type="term" value="P:ectoine biosynthetic process"/>
    <property type="evidence" value="ECO:0007669"/>
    <property type="project" value="UniProtKB-UniRule"/>
</dbReference>
<dbReference type="CDD" id="cd06978">
    <property type="entry name" value="cupin_EctC"/>
    <property type="match status" value="1"/>
</dbReference>
<dbReference type="Gene3D" id="2.60.120.10">
    <property type="entry name" value="Jelly Rolls"/>
    <property type="match status" value="1"/>
</dbReference>
<dbReference type="HAMAP" id="MF_01255">
    <property type="entry name" value="Ectoine_synth"/>
    <property type="match status" value="1"/>
</dbReference>
<dbReference type="InterPro" id="IPR010462">
    <property type="entry name" value="Ectoine_synth"/>
</dbReference>
<dbReference type="InterPro" id="IPR014710">
    <property type="entry name" value="RmlC-like_jellyroll"/>
</dbReference>
<dbReference type="InterPro" id="IPR011051">
    <property type="entry name" value="RmlC_Cupin_sf"/>
</dbReference>
<dbReference type="NCBIfam" id="NF009806">
    <property type="entry name" value="PRK13290.1"/>
    <property type="match status" value="1"/>
</dbReference>
<dbReference type="PANTHER" id="PTHR39289">
    <property type="match status" value="1"/>
</dbReference>
<dbReference type="PANTHER" id="PTHR39289:SF1">
    <property type="entry name" value="L-ECTOINE SYNTHASE"/>
    <property type="match status" value="1"/>
</dbReference>
<dbReference type="Pfam" id="PF06339">
    <property type="entry name" value="Ectoine_synth"/>
    <property type="match status" value="1"/>
</dbReference>
<dbReference type="SUPFAM" id="SSF51182">
    <property type="entry name" value="RmlC-like cupins"/>
    <property type="match status" value="1"/>
</dbReference>
<comment type="function">
    <text evidence="3">Catalyzes the circularization of gamma-N-acetyl-alpha,gamma-diaminobutyric acid (ADABA) to ectoine (1,4,5,6-tetrahydro-2-methyl-4-pyrimidine carboxylic acid), which is an excellent osmoprotectant.</text>
</comment>
<comment type="catalytic activity">
    <reaction>
        <text>(2S)-4-acetamido-2-aminobutanoate = L-ectoine + H2O</text>
        <dbReference type="Rhea" id="RHEA:17281"/>
        <dbReference type="ChEBI" id="CHEBI:15377"/>
        <dbReference type="ChEBI" id="CHEBI:58515"/>
        <dbReference type="ChEBI" id="CHEBI:58929"/>
        <dbReference type="EC" id="4.2.1.108"/>
    </reaction>
</comment>
<comment type="pathway">
    <text>Amine and polyamine biosynthesis; ectoine biosynthesis; L-ectoine from L-aspartate 4-semialdehyde: step 3/3.</text>
</comment>
<comment type="induction">
    <text evidence="1">By osmotic stress.</text>
</comment>
<comment type="similarity">
    <text evidence="2">Belongs to the ectoine synthase family.</text>
</comment>
<reference key="1">
    <citation type="journal article" date="2002" name="Appl. Environ. Microbiol.">
        <title>Osmotically regulated synthesis of the compatible solute ectoine in Bacillus pasteurii and related Bacillus spp.</title>
        <authorList>
            <person name="Kuhlmann A.U."/>
            <person name="Bremer E."/>
        </authorList>
    </citation>
    <scope>NUCLEOTIDE SEQUENCE [GENOMIC DNA]</scope>
    <scope>FUNCTION</scope>
    <scope>INDUCTION</scope>
    <source>
        <strain>ATCC 11859 / DSM 33 / NCIB 8841 / NCTC 4822</strain>
    </source>
</reference>
<protein>
    <recommendedName>
        <fullName>L-ectoine synthase</fullName>
        <ecNumber>4.2.1.108</ecNumber>
    </recommendedName>
    <alternativeName>
        <fullName>N-acetyldiaminobutyrate dehydratase</fullName>
    </alternativeName>
</protein>
<name>ECTC_SPOPA</name>
<sequence length="134" mass="15086">MIVRTIDEIIGTENEVESDTWTSRRLLLEKDGMGFSFHETIIYAGTETHIHYQNHLEAVYCVGGDGEIETVSDGKVYPIQDGTMYALDQHDEHYPRGGKTDMRLICTFNPPLVGTETHDENGVYPLLSKQPVGK</sequence>
<feature type="chain" id="PRO_0000220146" description="L-ectoine synthase">
    <location>
        <begin position="1"/>
        <end position="134"/>
    </location>
</feature>
<proteinExistence type="evidence at transcript level"/>
<evidence type="ECO:0000269" key="1">
    <source>
    </source>
</evidence>
<evidence type="ECO:0000305" key="2"/>
<evidence type="ECO:0000305" key="3">
    <source>
    </source>
</evidence>
<gene>
    <name type="primary">ectC</name>
</gene>
<keyword id="KW-0456">Lyase</keyword>
<keyword id="KW-0346">Stress response</keyword>
<organism>
    <name type="scientific">Sporosarcina pasteurii</name>
    <name type="common">Bacillus pasteurii</name>
    <dbReference type="NCBI Taxonomy" id="1474"/>
    <lineage>
        <taxon>Bacteria</taxon>
        <taxon>Bacillati</taxon>
        <taxon>Bacillota</taxon>
        <taxon>Bacilli</taxon>
        <taxon>Bacillales</taxon>
        <taxon>Caryophanaceae</taxon>
        <taxon>Sporosarcina</taxon>
    </lineage>
</organism>